<accession>Q21M08</accession>
<keyword id="KW-1185">Reference proteome</keyword>
<keyword id="KW-0687">Ribonucleoprotein</keyword>
<keyword id="KW-0689">Ribosomal protein</keyword>
<gene>
    <name evidence="1" type="primary">rpmA</name>
    <name type="ordered locus">Sde_1009</name>
</gene>
<organism>
    <name type="scientific">Saccharophagus degradans (strain 2-40 / ATCC 43961 / DSM 17024)</name>
    <dbReference type="NCBI Taxonomy" id="203122"/>
    <lineage>
        <taxon>Bacteria</taxon>
        <taxon>Pseudomonadati</taxon>
        <taxon>Pseudomonadota</taxon>
        <taxon>Gammaproteobacteria</taxon>
        <taxon>Cellvibrionales</taxon>
        <taxon>Cellvibrionaceae</taxon>
        <taxon>Saccharophagus</taxon>
    </lineage>
</organism>
<feature type="chain" id="PRO_1000017592" description="Large ribosomal subunit protein bL27">
    <location>
        <begin position="1"/>
        <end position="85"/>
    </location>
</feature>
<feature type="region of interest" description="Disordered" evidence="2">
    <location>
        <begin position="1"/>
        <end position="26"/>
    </location>
</feature>
<dbReference type="EMBL" id="CP000282">
    <property type="protein sequence ID" value="ABD80271.1"/>
    <property type="molecule type" value="Genomic_DNA"/>
</dbReference>
<dbReference type="RefSeq" id="WP_011467491.1">
    <property type="nucleotide sequence ID" value="NC_007912.1"/>
</dbReference>
<dbReference type="SMR" id="Q21M08"/>
<dbReference type="STRING" id="203122.Sde_1009"/>
<dbReference type="GeneID" id="98612693"/>
<dbReference type="KEGG" id="sde:Sde_1009"/>
<dbReference type="eggNOG" id="COG0211">
    <property type="taxonomic scope" value="Bacteria"/>
</dbReference>
<dbReference type="HOGENOM" id="CLU_095424_4_1_6"/>
<dbReference type="OrthoDB" id="9803474at2"/>
<dbReference type="Proteomes" id="UP000001947">
    <property type="component" value="Chromosome"/>
</dbReference>
<dbReference type="GO" id="GO:0022625">
    <property type="term" value="C:cytosolic large ribosomal subunit"/>
    <property type="evidence" value="ECO:0007669"/>
    <property type="project" value="TreeGrafter"/>
</dbReference>
<dbReference type="GO" id="GO:0003735">
    <property type="term" value="F:structural constituent of ribosome"/>
    <property type="evidence" value="ECO:0007669"/>
    <property type="project" value="InterPro"/>
</dbReference>
<dbReference type="GO" id="GO:0006412">
    <property type="term" value="P:translation"/>
    <property type="evidence" value="ECO:0007669"/>
    <property type="project" value="UniProtKB-UniRule"/>
</dbReference>
<dbReference type="FunFam" id="2.40.50.100:FF:000001">
    <property type="entry name" value="50S ribosomal protein L27"/>
    <property type="match status" value="1"/>
</dbReference>
<dbReference type="Gene3D" id="2.40.50.100">
    <property type="match status" value="1"/>
</dbReference>
<dbReference type="HAMAP" id="MF_00539">
    <property type="entry name" value="Ribosomal_bL27"/>
    <property type="match status" value="1"/>
</dbReference>
<dbReference type="InterPro" id="IPR001684">
    <property type="entry name" value="Ribosomal_bL27"/>
</dbReference>
<dbReference type="InterPro" id="IPR018261">
    <property type="entry name" value="Ribosomal_bL27_CS"/>
</dbReference>
<dbReference type="NCBIfam" id="TIGR00062">
    <property type="entry name" value="L27"/>
    <property type="match status" value="1"/>
</dbReference>
<dbReference type="PANTHER" id="PTHR15893:SF0">
    <property type="entry name" value="LARGE RIBOSOMAL SUBUNIT PROTEIN BL27M"/>
    <property type="match status" value="1"/>
</dbReference>
<dbReference type="PANTHER" id="PTHR15893">
    <property type="entry name" value="RIBOSOMAL PROTEIN L27"/>
    <property type="match status" value="1"/>
</dbReference>
<dbReference type="Pfam" id="PF01016">
    <property type="entry name" value="Ribosomal_L27"/>
    <property type="match status" value="1"/>
</dbReference>
<dbReference type="PRINTS" id="PR00063">
    <property type="entry name" value="RIBOSOMALL27"/>
</dbReference>
<dbReference type="SUPFAM" id="SSF110324">
    <property type="entry name" value="Ribosomal L27 protein-like"/>
    <property type="match status" value="1"/>
</dbReference>
<dbReference type="PROSITE" id="PS00831">
    <property type="entry name" value="RIBOSOMAL_L27"/>
    <property type="match status" value="1"/>
</dbReference>
<protein>
    <recommendedName>
        <fullName evidence="1">Large ribosomal subunit protein bL27</fullName>
    </recommendedName>
    <alternativeName>
        <fullName evidence="3">50S ribosomal protein L27</fullName>
    </alternativeName>
</protein>
<reference key="1">
    <citation type="journal article" date="2008" name="PLoS Genet.">
        <title>Complete genome sequence of the complex carbohydrate-degrading marine bacterium, Saccharophagus degradans strain 2-40 T.</title>
        <authorList>
            <person name="Weiner R.M."/>
            <person name="Taylor L.E. II"/>
            <person name="Henrissat B."/>
            <person name="Hauser L."/>
            <person name="Land M."/>
            <person name="Coutinho P.M."/>
            <person name="Rancurel C."/>
            <person name="Saunders E.H."/>
            <person name="Longmire A.G."/>
            <person name="Zhang H."/>
            <person name="Bayer E.A."/>
            <person name="Gilbert H.J."/>
            <person name="Larimer F."/>
            <person name="Zhulin I.B."/>
            <person name="Ekborg N.A."/>
            <person name="Lamed R."/>
            <person name="Richardson P.M."/>
            <person name="Borovok I."/>
            <person name="Hutcheson S."/>
        </authorList>
    </citation>
    <scope>NUCLEOTIDE SEQUENCE [LARGE SCALE GENOMIC DNA]</scope>
    <source>
        <strain>2-40 / ATCC 43961 / DSM 17024</strain>
    </source>
</reference>
<proteinExistence type="inferred from homology"/>
<comment type="similarity">
    <text evidence="1">Belongs to the bacterial ribosomal protein bL27 family.</text>
</comment>
<sequence>MAHKKAGGSTRNGRDSESKRLGVKRFGGETVTAGSIIVRQRGTRVHPGENVGLGKDHTLFAKVEGAVKFEVKGPNNRKYVSIVAA</sequence>
<evidence type="ECO:0000255" key="1">
    <source>
        <dbReference type="HAMAP-Rule" id="MF_00539"/>
    </source>
</evidence>
<evidence type="ECO:0000256" key="2">
    <source>
        <dbReference type="SAM" id="MobiDB-lite"/>
    </source>
</evidence>
<evidence type="ECO:0000305" key="3"/>
<name>RL27_SACD2</name>